<name>TRM5_ENTH1</name>
<gene>
    <name type="ORF">EHI_111740</name>
</gene>
<sequence length="382" mass="43966">MEKEQLPELKYINVNDFNINEKVIGIPVQTNEVAKYMKMFKGLCYNRIKTKCVIPYNSERMILLETPLKEQTQKLIQDNHLKTVETEVPLTIKNFNVNEIMKRYINKNIQLPSSFETVGTLAHMNLKEEQMEFKYIIGEAFLIKNYPRIQTVITKTAEISNEFRTFPLEVIAGIPNTEVTVICHGVKFVLDYAQCYWNTRLETEHIRIINQMKAGEILCDAFAGVGPFAIPAALKGVKVYANDLNPTAVKYMRINAVNNKTTIECDNMDARDYLRKIVLEKHIQPNYILMNLPATAIEFLDCIPELYLQHCMIHCYGFSPLPNAEDLKKKAFELLKGEYPITIREVRDVAPKKVMYCLSIFIESTKHLTSGNNVPEAKKTLN</sequence>
<organism>
    <name type="scientific">Entamoeba histolytica (strain ATCC 30459 / HM-1:IMSS / ABRM)</name>
    <dbReference type="NCBI Taxonomy" id="294381"/>
    <lineage>
        <taxon>Eukaryota</taxon>
        <taxon>Amoebozoa</taxon>
        <taxon>Evosea</taxon>
        <taxon>Archamoebae</taxon>
        <taxon>Mastigamoebida</taxon>
        <taxon>Entamoebidae</taxon>
        <taxon>Entamoeba</taxon>
    </lineage>
</organism>
<accession>C4M572</accession>
<feature type="chain" id="PRO_0000414135" description="tRNA (guanine(37)-N(1))-methyltransferase">
    <location>
        <begin position="1"/>
        <end position="382"/>
    </location>
</feature>
<feature type="binding site" evidence="1">
    <location>
        <position position="205"/>
    </location>
    <ligand>
        <name>S-adenosyl-L-methionine</name>
        <dbReference type="ChEBI" id="CHEBI:59789"/>
    </ligand>
</feature>
<feature type="binding site" evidence="1">
    <location>
        <begin position="243"/>
        <end position="244"/>
    </location>
    <ligand>
        <name>S-adenosyl-L-methionine</name>
        <dbReference type="ChEBI" id="CHEBI:59789"/>
    </ligand>
</feature>
<feature type="binding site" evidence="1">
    <location>
        <begin position="269"/>
        <end position="270"/>
    </location>
    <ligand>
        <name>S-adenosyl-L-methionine</name>
        <dbReference type="ChEBI" id="CHEBI:59789"/>
    </ligand>
</feature>
<feature type="binding site" evidence="1">
    <location>
        <position position="291"/>
    </location>
    <ligand>
        <name>S-adenosyl-L-methionine</name>
        <dbReference type="ChEBI" id="CHEBI:59789"/>
    </ligand>
</feature>
<evidence type="ECO:0000255" key="1">
    <source>
        <dbReference type="HAMAP-Rule" id="MF_03152"/>
    </source>
</evidence>
<evidence type="ECO:0000305" key="2"/>
<protein>
    <recommendedName>
        <fullName evidence="1">tRNA (guanine(37)-N(1))-methyltransferase</fullName>
        <ecNumber evidence="1">2.1.1.228</ecNumber>
    </recommendedName>
    <alternativeName>
        <fullName evidence="1">M1G-methyltransferase</fullName>
    </alternativeName>
    <alternativeName>
        <fullName evidence="1">tRNA [GM37] methyltransferase</fullName>
    </alternativeName>
    <alternativeName>
        <fullName evidence="1">tRNA methyltransferase 5 homolog</fullName>
    </alternativeName>
</protein>
<reference key="1">
    <citation type="journal article" date="2005" name="Nature">
        <title>The genome of the protist parasite Entamoeba histolytica.</title>
        <authorList>
            <person name="Loftus B.J."/>
            <person name="Anderson I."/>
            <person name="Davies R."/>
            <person name="Alsmark U.C."/>
            <person name="Samuelson J."/>
            <person name="Amedeo P."/>
            <person name="Roncaglia P."/>
            <person name="Berriman M."/>
            <person name="Hirt R.P."/>
            <person name="Mann B.J."/>
            <person name="Nozaki T."/>
            <person name="Suh B."/>
            <person name="Pop M."/>
            <person name="Duchene M."/>
            <person name="Ackers J."/>
            <person name="Tannich E."/>
            <person name="Leippe M."/>
            <person name="Hofer M."/>
            <person name="Bruchhaus I."/>
            <person name="Willhoeft U."/>
            <person name="Bhattacharya A."/>
            <person name="Chillingworth T."/>
            <person name="Churcher C.M."/>
            <person name="Hance Z."/>
            <person name="Harris B."/>
            <person name="Harris D."/>
            <person name="Jagels K."/>
            <person name="Moule S."/>
            <person name="Mungall K.L."/>
            <person name="Ormond D."/>
            <person name="Squares R."/>
            <person name="Whitehead S."/>
            <person name="Quail M.A."/>
            <person name="Rabbinowitsch E."/>
            <person name="Norbertczak H."/>
            <person name="Price C."/>
            <person name="Wang Z."/>
            <person name="Guillen N."/>
            <person name="Gilchrist C."/>
            <person name="Stroup S.E."/>
            <person name="Bhattacharya S."/>
            <person name="Lohia A."/>
            <person name="Foster P.G."/>
            <person name="Sicheritz-Ponten T."/>
            <person name="Weber C."/>
            <person name="Singh U."/>
            <person name="Mukherjee C."/>
            <person name="El-Sayed N.M.A."/>
            <person name="Petri W.A."/>
            <person name="Clark C.G."/>
            <person name="Embley T.M."/>
            <person name="Barrell B.G."/>
            <person name="Fraser C.M."/>
            <person name="Hall N."/>
        </authorList>
    </citation>
    <scope>NUCLEOTIDE SEQUENCE [LARGE SCALE GENOMIC DNA]</scope>
    <source>
        <strain>ATCC 30459 / HM-1:IMSS / ABRM</strain>
    </source>
</reference>
<reference key="2">
    <citation type="journal article" date="2010" name="PLoS Negl. Trop. Dis.">
        <title>New assembly, reannotation and analysis of the Entamoeba histolytica genome reveal new genomic features and protein content information.</title>
        <authorList>
            <person name="Lorenzi H.A."/>
            <person name="Puiu D."/>
            <person name="Miller J.R."/>
            <person name="Brinkac L.M."/>
            <person name="Amedeo P."/>
            <person name="Hall N."/>
            <person name="Caler E.V."/>
        </authorList>
    </citation>
    <scope>GENOME REANNOTATION</scope>
    <source>
        <strain>ATCC 30459 / HM-1:IMSS / ABRM</strain>
    </source>
</reference>
<keyword id="KW-0963">Cytoplasm</keyword>
<keyword id="KW-0489">Methyltransferase</keyword>
<keyword id="KW-0496">Mitochondrion</keyword>
<keyword id="KW-0539">Nucleus</keyword>
<keyword id="KW-1185">Reference proteome</keyword>
<keyword id="KW-0949">S-adenosyl-L-methionine</keyword>
<keyword id="KW-0808">Transferase</keyword>
<keyword id="KW-0819">tRNA processing</keyword>
<proteinExistence type="inferred from homology"/>
<dbReference type="EC" id="2.1.1.228" evidence="1"/>
<dbReference type="EMBL" id="DS571273">
    <property type="protein sequence ID" value="EAL44708.1"/>
    <property type="molecule type" value="Genomic_DNA"/>
</dbReference>
<dbReference type="RefSeq" id="XP_650095.1">
    <property type="nucleotide sequence ID" value="XM_645003.1"/>
</dbReference>
<dbReference type="SMR" id="C4M572"/>
<dbReference type="FunCoup" id="C4M572">
    <property type="interactions" value="529"/>
</dbReference>
<dbReference type="STRING" id="5759.C4M572"/>
<dbReference type="GeneID" id="3404392"/>
<dbReference type="KEGG" id="ehi:EHI_111740"/>
<dbReference type="VEuPathDB" id="AmoebaDB:EHI5A_034330"/>
<dbReference type="VEuPathDB" id="AmoebaDB:EHI7A_122740"/>
<dbReference type="VEuPathDB" id="AmoebaDB:EHI8A_131640"/>
<dbReference type="VEuPathDB" id="AmoebaDB:EHI_111740"/>
<dbReference type="VEuPathDB" id="AmoebaDB:KM1_055230"/>
<dbReference type="eggNOG" id="KOG2078">
    <property type="taxonomic scope" value="Eukaryota"/>
</dbReference>
<dbReference type="InParanoid" id="C4M572"/>
<dbReference type="OMA" id="VGSHSQF"/>
<dbReference type="OrthoDB" id="408788at2759"/>
<dbReference type="Proteomes" id="UP000001926">
    <property type="component" value="Partially assembled WGS sequence"/>
</dbReference>
<dbReference type="GO" id="GO:0005737">
    <property type="term" value="C:cytoplasm"/>
    <property type="evidence" value="ECO:0000318"/>
    <property type="project" value="GO_Central"/>
</dbReference>
<dbReference type="GO" id="GO:0005759">
    <property type="term" value="C:mitochondrial matrix"/>
    <property type="evidence" value="ECO:0007669"/>
    <property type="project" value="UniProtKB-SubCell"/>
</dbReference>
<dbReference type="GO" id="GO:0005634">
    <property type="term" value="C:nucleus"/>
    <property type="evidence" value="ECO:0007669"/>
    <property type="project" value="UniProtKB-SubCell"/>
</dbReference>
<dbReference type="GO" id="GO:0052906">
    <property type="term" value="F:tRNA (guanine(37)-N1)-methyltransferase activity"/>
    <property type="evidence" value="ECO:0007669"/>
    <property type="project" value="UniProtKB-UniRule"/>
</dbReference>
<dbReference type="GO" id="GO:0008175">
    <property type="term" value="F:tRNA methyltransferase activity"/>
    <property type="evidence" value="ECO:0000318"/>
    <property type="project" value="GO_Central"/>
</dbReference>
<dbReference type="GO" id="GO:0002939">
    <property type="term" value="P:tRNA N1-guanine methylation"/>
    <property type="evidence" value="ECO:0000318"/>
    <property type="project" value="GO_Central"/>
</dbReference>
<dbReference type="CDD" id="cd02440">
    <property type="entry name" value="AdoMet_MTases"/>
    <property type="match status" value="1"/>
</dbReference>
<dbReference type="FunFam" id="3.30.300.110:FF:000001">
    <property type="entry name" value="tRNA (guanine(37)-N1)-methyltransferase"/>
    <property type="match status" value="1"/>
</dbReference>
<dbReference type="FunFam" id="3.40.50.150:FF:000423">
    <property type="entry name" value="tRNA (guanine(37)-N1)-methyltransferase"/>
    <property type="match status" value="1"/>
</dbReference>
<dbReference type="Gene3D" id="3.30.300.110">
    <property type="entry name" value="Met-10+ protein-like domains"/>
    <property type="match status" value="1"/>
</dbReference>
<dbReference type="Gene3D" id="3.40.50.150">
    <property type="entry name" value="Vaccinia Virus protein VP39"/>
    <property type="match status" value="1"/>
</dbReference>
<dbReference type="HAMAP" id="MF_03152">
    <property type="entry name" value="TRM5"/>
    <property type="match status" value="1"/>
</dbReference>
<dbReference type="InterPro" id="IPR030382">
    <property type="entry name" value="MeTrfase_TRM5/TYW2"/>
</dbReference>
<dbReference type="InterPro" id="IPR029063">
    <property type="entry name" value="SAM-dependent_MTases_sf"/>
</dbReference>
<dbReference type="InterPro" id="IPR056743">
    <property type="entry name" value="TRM5-TYW2-like_MTfase"/>
</dbReference>
<dbReference type="InterPro" id="IPR056744">
    <property type="entry name" value="TRM5/TYW2-like_N"/>
</dbReference>
<dbReference type="InterPro" id="IPR025792">
    <property type="entry name" value="tRNA_Gua_MeTrfase_euk"/>
</dbReference>
<dbReference type="PANTHER" id="PTHR23245:SF43">
    <property type="entry name" value="TRNA (GUANINE(37)-N1)-METHYLTRANSFERASE 2"/>
    <property type="match status" value="1"/>
</dbReference>
<dbReference type="PANTHER" id="PTHR23245">
    <property type="entry name" value="TRNA METHYLTRANSFERASE"/>
    <property type="match status" value="1"/>
</dbReference>
<dbReference type="Pfam" id="PF02475">
    <property type="entry name" value="TRM5-TYW2_MTfase"/>
    <property type="match status" value="1"/>
</dbReference>
<dbReference type="Pfam" id="PF25133">
    <property type="entry name" value="TYW2_N_2"/>
    <property type="match status" value="1"/>
</dbReference>
<dbReference type="SUPFAM" id="SSF53335">
    <property type="entry name" value="S-adenosyl-L-methionine-dependent methyltransferases"/>
    <property type="match status" value="1"/>
</dbReference>
<dbReference type="PROSITE" id="PS51684">
    <property type="entry name" value="SAM_MT_TRM5_TYW2"/>
    <property type="match status" value="1"/>
</dbReference>
<comment type="function">
    <text evidence="1">Specifically methylates the N1 position of guanosine-37 in various cytoplasmic and mitochondrial tRNAs. Methylation is not dependent on the nature of the nucleoside 5' of the target nucleoside. This is the first step in the biosynthesis of wybutosine (yW), a modified base adjacent to the anticodon of tRNAs and required for accurate decoding.</text>
</comment>
<comment type="catalytic activity">
    <reaction evidence="1">
        <text>guanosine(37) in tRNA + S-adenosyl-L-methionine = N(1)-methylguanosine(37) in tRNA + S-adenosyl-L-homocysteine + H(+)</text>
        <dbReference type="Rhea" id="RHEA:36899"/>
        <dbReference type="Rhea" id="RHEA-COMP:10145"/>
        <dbReference type="Rhea" id="RHEA-COMP:10147"/>
        <dbReference type="ChEBI" id="CHEBI:15378"/>
        <dbReference type="ChEBI" id="CHEBI:57856"/>
        <dbReference type="ChEBI" id="CHEBI:59789"/>
        <dbReference type="ChEBI" id="CHEBI:73542"/>
        <dbReference type="ChEBI" id="CHEBI:74269"/>
        <dbReference type="EC" id="2.1.1.228"/>
    </reaction>
</comment>
<comment type="subunit">
    <text evidence="1">Monomer.</text>
</comment>
<comment type="subcellular location">
    <subcellularLocation>
        <location evidence="1">Mitochondrion matrix</location>
    </subcellularLocation>
    <subcellularLocation>
        <location evidence="1">Nucleus</location>
    </subcellularLocation>
    <subcellularLocation>
        <location evidence="1">Cytoplasm</location>
    </subcellularLocation>
    <text evidence="1">Predominantly in the mitochondria and in the nucleus.</text>
</comment>
<comment type="similarity">
    <text evidence="2">Belongs to the class I-like SAM-binding methyltransferase superfamily. TRM5/TYW2 family.</text>
</comment>